<accession>C5JKQ2</accession>
<accession>A0A179UIA0</accession>
<feature type="chain" id="PRO_0000389270" description="Small ribosomal subunit protein uS2">
    <location>
        <begin position="1"/>
        <end position="301"/>
    </location>
</feature>
<protein>
    <recommendedName>
        <fullName evidence="1">Small ribosomal subunit protein uS2</fullName>
    </recommendedName>
    <alternativeName>
        <fullName evidence="2">40S ribosomal protein S0</fullName>
    </alternativeName>
</protein>
<sequence length="301" mass="32214">MAPSNLPPIFNATSQDIEMLLAAQCHLGSKNLQVHMDPYLWKTRPDGINVINIGKTWEKIVLAARIIAAIDNPADVCVISARPYGQRAVLKFAAHTGAAAIAGRFTPGNFTNYITRSFKEPRLIIVTDPRTDHQAIKEASYVNIPVIALCDTDSPTEFVDVAIPTNNKGRHAIGLIWWMLAREVLRLRGTIASRETEWDVVVDLYFYRDPEAEENKEIEEAKVPGAEEVGAAAIESGLVGDSWEAQVAPAFAATGAAVPAGAAPGWEAEAAGEWAASSGAAAGAAETWATDTAAPDAGVKW</sequence>
<evidence type="ECO:0000255" key="1">
    <source>
        <dbReference type="HAMAP-Rule" id="MF_03015"/>
    </source>
</evidence>
<evidence type="ECO:0000305" key="2"/>
<dbReference type="EMBL" id="GG657451">
    <property type="protein sequence ID" value="OAT06988.1"/>
    <property type="molecule type" value="Genomic_DNA"/>
</dbReference>
<dbReference type="RefSeq" id="XP_002626927.1">
    <property type="nucleotide sequence ID" value="XM_002626881.1"/>
</dbReference>
<dbReference type="SMR" id="C5JKQ2"/>
<dbReference type="STRING" id="559298.C5JKQ2"/>
<dbReference type="GeneID" id="8510100"/>
<dbReference type="KEGG" id="bgh:BDBG_03104"/>
<dbReference type="VEuPathDB" id="FungiDB:BDBG_03104"/>
<dbReference type="HOGENOM" id="CLU_058171_0_1_1"/>
<dbReference type="OrthoDB" id="414863at2759"/>
<dbReference type="Proteomes" id="UP000002038">
    <property type="component" value="Unassembled WGS sequence"/>
</dbReference>
<dbReference type="GO" id="GO:0022627">
    <property type="term" value="C:cytosolic small ribosomal subunit"/>
    <property type="evidence" value="ECO:0007669"/>
    <property type="project" value="UniProtKB-UniRule"/>
</dbReference>
<dbReference type="GO" id="GO:0003735">
    <property type="term" value="F:structural constituent of ribosome"/>
    <property type="evidence" value="ECO:0007669"/>
    <property type="project" value="UniProtKB-UniRule"/>
</dbReference>
<dbReference type="GO" id="GO:0000028">
    <property type="term" value="P:ribosomal small subunit assembly"/>
    <property type="evidence" value="ECO:0007669"/>
    <property type="project" value="UniProtKB-UniRule"/>
</dbReference>
<dbReference type="GO" id="GO:0006412">
    <property type="term" value="P:translation"/>
    <property type="evidence" value="ECO:0007669"/>
    <property type="project" value="UniProtKB-UniRule"/>
</dbReference>
<dbReference type="CDD" id="cd01425">
    <property type="entry name" value="RPS2"/>
    <property type="match status" value="1"/>
</dbReference>
<dbReference type="FunFam" id="3.40.50.10490:FF:000010">
    <property type="entry name" value="40S ribosomal protein S0"/>
    <property type="match status" value="1"/>
</dbReference>
<dbReference type="Gene3D" id="3.40.50.10490">
    <property type="entry name" value="Glucose-6-phosphate isomerase like protein, domain 1"/>
    <property type="match status" value="1"/>
</dbReference>
<dbReference type="HAMAP" id="MF_03015">
    <property type="entry name" value="Ribosomal_S2_euk"/>
    <property type="match status" value="1"/>
</dbReference>
<dbReference type="InterPro" id="IPR001865">
    <property type="entry name" value="Ribosomal_uS2"/>
</dbReference>
<dbReference type="InterPro" id="IPR032281">
    <property type="entry name" value="Ribosomal_uS2_C"/>
</dbReference>
<dbReference type="InterPro" id="IPR018130">
    <property type="entry name" value="Ribosomal_uS2_CS"/>
</dbReference>
<dbReference type="InterPro" id="IPR027498">
    <property type="entry name" value="Ribosomal_uS2_euk"/>
</dbReference>
<dbReference type="InterPro" id="IPR005707">
    <property type="entry name" value="Ribosomal_uS2_euk/arc"/>
</dbReference>
<dbReference type="InterPro" id="IPR023591">
    <property type="entry name" value="Ribosomal_uS2_flav_dom_sf"/>
</dbReference>
<dbReference type="NCBIfam" id="TIGR01012">
    <property type="entry name" value="uS2_euk_arch"/>
    <property type="match status" value="1"/>
</dbReference>
<dbReference type="PANTHER" id="PTHR11489">
    <property type="entry name" value="40S RIBOSOMAL PROTEIN SA"/>
    <property type="match status" value="1"/>
</dbReference>
<dbReference type="Pfam" id="PF16122">
    <property type="entry name" value="40S_SA_C"/>
    <property type="match status" value="1"/>
</dbReference>
<dbReference type="Pfam" id="PF00318">
    <property type="entry name" value="Ribosomal_S2"/>
    <property type="match status" value="2"/>
</dbReference>
<dbReference type="PRINTS" id="PR00395">
    <property type="entry name" value="RIBOSOMALS2"/>
</dbReference>
<dbReference type="SUPFAM" id="SSF52313">
    <property type="entry name" value="Ribosomal protein S2"/>
    <property type="match status" value="1"/>
</dbReference>
<dbReference type="PROSITE" id="PS00963">
    <property type="entry name" value="RIBOSOMAL_S2_2"/>
    <property type="match status" value="1"/>
</dbReference>
<gene>
    <name evidence="1" type="primary">RPS0</name>
    <name type="ORF">BDBG_03104</name>
</gene>
<name>RSSA_BLAGS</name>
<reference key="1">
    <citation type="journal article" date="2015" name="PLoS Genet.">
        <title>The dynamic genome and transcriptome of the human fungal pathogen Blastomyces and close relative Emmonsia.</title>
        <authorList>
            <person name="Munoz J.F."/>
            <person name="Gauthier G.M."/>
            <person name="Desjardins C.A."/>
            <person name="Gallo J.E."/>
            <person name="Holder J."/>
            <person name="Sullivan T.D."/>
            <person name="Marty A.J."/>
            <person name="Carmen J.C."/>
            <person name="Chen Z."/>
            <person name="Ding L."/>
            <person name="Gujja S."/>
            <person name="Magrini V."/>
            <person name="Misas E."/>
            <person name="Mitreva M."/>
            <person name="Priest M."/>
            <person name="Saif S."/>
            <person name="Whiston E.A."/>
            <person name="Young S."/>
            <person name="Zeng Q."/>
            <person name="Goldman W.E."/>
            <person name="Mardis E.R."/>
            <person name="Taylor J.W."/>
            <person name="McEwen J.G."/>
            <person name="Clay O.K."/>
            <person name="Klein B.S."/>
            <person name="Cuomo C.A."/>
        </authorList>
    </citation>
    <scope>NUCLEOTIDE SEQUENCE [LARGE SCALE GENOMIC DNA]</scope>
    <source>
        <strain>SLH14081</strain>
    </source>
</reference>
<keyword id="KW-0963">Cytoplasm</keyword>
<keyword id="KW-1185">Reference proteome</keyword>
<keyword id="KW-0687">Ribonucleoprotein</keyword>
<keyword id="KW-0689">Ribosomal protein</keyword>
<organism>
    <name type="scientific">Blastomyces gilchristii (strain SLH14081)</name>
    <name type="common">Blastomyces dermatitidis</name>
    <dbReference type="NCBI Taxonomy" id="559298"/>
    <lineage>
        <taxon>Eukaryota</taxon>
        <taxon>Fungi</taxon>
        <taxon>Dikarya</taxon>
        <taxon>Ascomycota</taxon>
        <taxon>Pezizomycotina</taxon>
        <taxon>Eurotiomycetes</taxon>
        <taxon>Eurotiomycetidae</taxon>
        <taxon>Onygenales</taxon>
        <taxon>Ajellomycetaceae</taxon>
        <taxon>Blastomyces</taxon>
    </lineage>
</organism>
<proteinExistence type="inferred from homology"/>
<comment type="function">
    <text evidence="1">Required for the assembly and/or stability of the 40S ribosomal subunit. Required for the processing of the 20S rRNA-precursor to mature 18S rRNA in a late step of the maturation of 40S ribosomal subunits.</text>
</comment>
<comment type="subunit">
    <text evidence="1">Component of the small ribosomal subunit. Mature ribosomes consist of a small (40S) and a large (60S) subunit. The 40S subunit contains about 33 different proteins and 1 molecule of RNA (18S). The 60S subunit contains about 49 different proteins and 3 molecules of RNA (25S, 5.8S and 5S). Interacts with RPS21.</text>
</comment>
<comment type="subcellular location">
    <subcellularLocation>
        <location evidence="1">Cytoplasm</location>
    </subcellularLocation>
</comment>
<comment type="similarity">
    <text evidence="1">Belongs to the universal ribosomal protein uS2 family.</text>
</comment>